<reference key="1">
    <citation type="journal article" date="2006" name="Nat. Genet.">
        <title>The multidrug-resistant human pathogen Clostridium difficile has a highly mobile, mosaic genome.</title>
        <authorList>
            <person name="Sebaihia M."/>
            <person name="Wren B.W."/>
            <person name="Mullany P."/>
            <person name="Fairweather N.F."/>
            <person name="Minton N."/>
            <person name="Stabler R."/>
            <person name="Thomson N.R."/>
            <person name="Roberts A.P."/>
            <person name="Cerdeno-Tarraga A.M."/>
            <person name="Wang H."/>
            <person name="Holden M.T.G."/>
            <person name="Wright A."/>
            <person name="Churcher C."/>
            <person name="Quail M.A."/>
            <person name="Baker S."/>
            <person name="Bason N."/>
            <person name="Brooks K."/>
            <person name="Chillingworth T."/>
            <person name="Cronin A."/>
            <person name="Davis P."/>
            <person name="Dowd L."/>
            <person name="Fraser A."/>
            <person name="Feltwell T."/>
            <person name="Hance Z."/>
            <person name="Holroyd S."/>
            <person name="Jagels K."/>
            <person name="Moule S."/>
            <person name="Mungall K."/>
            <person name="Price C."/>
            <person name="Rabbinowitsch E."/>
            <person name="Sharp S."/>
            <person name="Simmonds M."/>
            <person name="Stevens K."/>
            <person name="Unwin L."/>
            <person name="Whithead S."/>
            <person name="Dupuy B."/>
            <person name="Dougan G."/>
            <person name="Barrell B."/>
            <person name="Parkhill J."/>
        </authorList>
    </citation>
    <scope>NUCLEOTIDE SEQUENCE [LARGE SCALE GENOMIC DNA]</scope>
    <source>
        <strain>630</strain>
    </source>
</reference>
<name>RL24_CLOD6</name>
<feature type="chain" id="PRO_0000355664" description="Large ribosomal subunit protein uL24">
    <location>
        <begin position="1"/>
        <end position="101"/>
    </location>
</feature>
<comment type="function">
    <text evidence="1">One of two assembly initiator proteins, it binds directly to the 5'-end of the 23S rRNA, where it nucleates assembly of the 50S subunit.</text>
</comment>
<comment type="function">
    <text evidence="1">One of the proteins that surrounds the polypeptide exit tunnel on the outside of the subunit.</text>
</comment>
<comment type="subunit">
    <text evidence="1">Part of the 50S ribosomal subunit.</text>
</comment>
<comment type="similarity">
    <text evidence="1">Belongs to the universal ribosomal protein uL24 family.</text>
</comment>
<proteinExistence type="inferred from homology"/>
<organism>
    <name type="scientific">Clostridioides difficile (strain 630)</name>
    <name type="common">Peptoclostridium difficile</name>
    <dbReference type="NCBI Taxonomy" id="272563"/>
    <lineage>
        <taxon>Bacteria</taxon>
        <taxon>Bacillati</taxon>
        <taxon>Bacillota</taxon>
        <taxon>Clostridia</taxon>
        <taxon>Peptostreptococcales</taxon>
        <taxon>Peptostreptococcaceae</taxon>
        <taxon>Clostridioides</taxon>
    </lineage>
</organism>
<dbReference type="EMBL" id="AM180355">
    <property type="protein sequence ID" value="CAJ66899.2"/>
    <property type="molecule type" value="Genomic_DNA"/>
</dbReference>
<dbReference type="RefSeq" id="WP_003427723.1">
    <property type="nucleotide sequence ID" value="NZ_JAUPES010000043.1"/>
</dbReference>
<dbReference type="RefSeq" id="YP_001086548.2">
    <property type="nucleotide sequence ID" value="NC_009089.1"/>
</dbReference>
<dbReference type="SMR" id="Q18CG6"/>
<dbReference type="STRING" id="272563.CD630_00830"/>
<dbReference type="EnsemblBacteria" id="CAJ66899">
    <property type="protein sequence ID" value="CAJ66899"/>
    <property type="gene ID" value="CD630_00830"/>
</dbReference>
<dbReference type="GeneID" id="66352582"/>
<dbReference type="KEGG" id="cdf:CD630_00830"/>
<dbReference type="PATRIC" id="fig|272563.8.peg.95"/>
<dbReference type="eggNOG" id="COG0198">
    <property type="taxonomic scope" value="Bacteria"/>
</dbReference>
<dbReference type="OrthoDB" id="9807419at2"/>
<dbReference type="PhylomeDB" id="Q18CG6"/>
<dbReference type="BioCyc" id="PDIF272563:G12WB-138-MONOMER"/>
<dbReference type="Proteomes" id="UP000001978">
    <property type="component" value="Chromosome"/>
</dbReference>
<dbReference type="GO" id="GO:1990904">
    <property type="term" value="C:ribonucleoprotein complex"/>
    <property type="evidence" value="ECO:0007669"/>
    <property type="project" value="UniProtKB-KW"/>
</dbReference>
<dbReference type="GO" id="GO:0005840">
    <property type="term" value="C:ribosome"/>
    <property type="evidence" value="ECO:0007669"/>
    <property type="project" value="UniProtKB-KW"/>
</dbReference>
<dbReference type="GO" id="GO:0019843">
    <property type="term" value="F:rRNA binding"/>
    <property type="evidence" value="ECO:0007669"/>
    <property type="project" value="UniProtKB-UniRule"/>
</dbReference>
<dbReference type="GO" id="GO:0003735">
    <property type="term" value="F:structural constituent of ribosome"/>
    <property type="evidence" value="ECO:0007669"/>
    <property type="project" value="InterPro"/>
</dbReference>
<dbReference type="GO" id="GO:0006412">
    <property type="term" value="P:translation"/>
    <property type="evidence" value="ECO:0007669"/>
    <property type="project" value="UniProtKB-UniRule"/>
</dbReference>
<dbReference type="CDD" id="cd06089">
    <property type="entry name" value="KOW_RPL26"/>
    <property type="match status" value="1"/>
</dbReference>
<dbReference type="FunFam" id="2.30.30.30:FF:000004">
    <property type="entry name" value="50S ribosomal protein L24"/>
    <property type="match status" value="1"/>
</dbReference>
<dbReference type="Gene3D" id="2.30.30.30">
    <property type="match status" value="1"/>
</dbReference>
<dbReference type="HAMAP" id="MF_01326_B">
    <property type="entry name" value="Ribosomal_uL24_B"/>
    <property type="match status" value="1"/>
</dbReference>
<dbReference type="InterPro" id="IPR005824">
    <property type="entry name" value="KOW"/>
</dbReference>
<dbReference type="InterPro" id="IPR014722">
    <property type="entry name" value="Rib_uL2_dom2"/>
</dbReference>
<dbReference type="InterPro" id="IPR003256">
    <property type="entry name" value="Ribosomal_uL24"/>
</dbReference>
<dbReference type="InterPro" id="IPR005825">
    <property type="entry name" value="Ribosomal_uL24_CS"/>
</dbReference>
<dbReference type="InterPro" id="IPR041988">
    <property type="entry name" value="Ribosomal_uL24_KOW"/>
</dbReference>
<dbReference type="InterPro" id="IPR008991">
    <property type="entry name" value="Translation_prot_SH3-like_sf"/>
</dbReference>
<dbReference type="NCBIfam" id="TIGR01079">
    <property type="entry name" value="rplX_bact"/>
    <property type="match status" value="1"/>
</dbReference>
<dbReference type="PANTHER" id="PTHR12903">
    <property type="entry name" value="MITOCHONDRIAL RIBOSOMAL PROTEIN L24"/>
    <property type="match status" value="1"/>
</dbReference>
<dbReference type="Pfam" id="PF00467">
    <property type="entry name" value="KOW"/>
    <property type="match status" value="1"/>
</dbReference>
<dbReference type="Pfam" id="PF17136">
    <property type="entry name" value="ribosomal_L24"/>
    <property type="match status" value="1"/>
</dbReference>
<dbReference type="SMART" id="SM00739">
    <property type="entry name" value="KOW"/>
    <property type="match status" value="1"/>
</dbReference>
<dbReference type="SUPFAM" id="SSF50104">
    <property type="entry name" value="Translation proteins SH3-like domain"/>
    <property type="match status" value="1"/>
</dbReference>
<dbReference type="PROSITE" id="PS01108">
    <property type="entry name" value="RIBOSOMAL_L24"/>
    <property type="match status" value="1"/>
</dbReference>
<evidence type="ECO:0000255" key="1">
    <source>
        <dbReference type="HAMAP-Rule" id="MF_01326"/>
    </source>
</evidence>
<evidence type="ECO:0000305" key="2"/>
<sequence length="101" mass="10953">MRVKKGDTVVVIAGKDKGKKGSVLKVYPKTSKVLVEGVNVITKHQKPSAMNQQGGIINKEAPIHISNVMPFDPETGKGVRVRYEVKDGNKVRVSAKSGKEL</sequence>
<accession>Q18CG6</accession>
<protein>
    <recommendedName>
        <fullName evidence="1">Large ribosomal subunit protein uL24</fullName>
    </recommendedName>
    <alternativeName>
        <fullName evidence="2">50S ribosomal protein L24</fullName>
    </alternativeName>
</protein>
<keyword id="KW-1185">Reference proteome</keyword>
<keyword id="KW-0687">Ribonucleoprotein</keyword>
<keyword id="KW-0689">Ribosomal protein</keyword>
<keyword id="KW-0694">RNA-binding</keyword>
<keyword id="KW-0699">rRNA-binding</keyword>
<gene>
    <name evidence="1" type="primary">rplX</name>
    <name type="ordered locus">CD630_00830</name>
</gene>